<sequence>MPLVPPHVASLTPYVPGKPIEEVEREYGVSNVAKLASNENALGPSPLALAAAREACAKVHLYPDGSAYLLRNAIAAKLGVPPEEVMVGNGSNELIELLVRTFVLDGEEVLTSAQSFVAYKLAAHEHGRTLVEAPMKGRFHYDLDALRKLLSRRTKLVFLANPDNPTGTWFTEAELTPFLDAVPKDTLVVLDEAYVEYVDAPGFQDGLALRRKYPNVVVLRTFSKIYGLAGMRLGYGLARPEVVEYVDRVRPPFNTNLVAQAAGAAALGDSAHVAKSRALVLEERPFLAKGLAALGAIVVPSQGNFVLADFPGRTGKDLFEALLREGVIARPVAGYGFPSALRITVGLRRENERCLAALGRILGA</sequence>
<protein>
    <recommendedName>
        <fullName evidence="1">Histidinol-phosphate aminotransferase</fullName>
        <ecNumber evidence="1">2.6.1.9</ecNumber>
    </recommendedName>
    <alternativeName>
        <fullName evidence="1">Imidazole acetol-phosphate transaminase</fullName>
    </alternativeName>
</protein>
<reference key="1">
    <citation type="journal article" date="2015" name="Genome Announc.">
        <title>Complete genome sequence of Anaeromyxobacter sp. Fw109-5, an anaerobic, metal-reducing bacterium isolated from a contaminated subsurface environment.</title>
        <authorList>
            <person name="Hwang C."/>
            <person name="Copeland A."/>
            <person name="Lucas S."/>
            <person name="Lapidus A."/>
            <person name="Barry K."/>
            <person name="Glavina Del Rio T."/>
            <person name="Dalin E."/>
            <person name="Tice H."/>
            <person name="Pitluck S."/>
            <person name="Sims D."/>
            <person name="Brettin T."/>
            <person name="Bruce D.C."/>
            <person name="Detter J.C."/>
            <person name="Han C.S."/>
            <person name="Schmutz J."/>
            <person name="Larimer F.W."/>
            <person name="Land M.L."/>
            <person name="Hauser L.J."/>
            <person name="Kyrpides N."/>
            <person name="Lykidis A."/>
            <person name="Richardson P."/>
            <person name="Belieav A."/>
            <person name="Sanford R.A."/>
            <person name="Loeffler F.E."/>
            <person name="Fields M.W."/>
        </authorList>
    </citation>
    <scope>NUCLEOTIDE SEQUENCE [LARGE SCALE GENOMIC DNA]</scope>
    <source>
        <strain>Fw109-5</strain>
    </source>
</reference>
<evidence type="ECO:0000255" key="1">
    <source>
        <dbReference type="HAMAP-Rule" id="MF_01023"/>
    </source>
</evidence>
<organism>
    <name type="scientific">Anaeromyxobacter sp. (strain Fw109-5)</name>
    <dbReference type="NCBI Taxonomy" id="404589"/>
    <lineage>
        <taxon>Bacteria</taxon>
        <taxon>Pseudomonadati</taxon>
        <taxon>Myxococcota</taxon>
        <taxon>Myxococcia</taxon>
        <taxon>Myxococcales</taxon>
        <taxon>Cystobacterineae</taxon>
        <taxon>Anaeromyxobacteraceae</taxon>
        <taxon>Anaeromyxobacter</taxon>
    </lineage>
</organism>
<feature type="chain" id="PRO_1000063458" description="Histidinol-phosphate aminotransferase">
    <location>
        <begin position="1"/>
        <end position="364"/>
    </location>
</feature>
<feature type="modified residue" description="N6-(pyridoxal phosphate)lysine" evidence="1">
    <location>
        <position position="224"/>
    </location>
</feature>
<accession>A7HCR6</accession>
<proteinExistence type="inferred from homology"/>
<comment type="catalytic activity">
    <reaction evidence="1">
        <text>L-histidinol phosphate + 2-oxoglutarate = 3-(imidazol-4-yl)-2-oxopropyl phosphate + L-glutamate</text>
        <dbReference type="Rhea" id="RHEA:23744"/>
        <dbReference type="ChEBI" id="CHEBI:16810"/>
        <dbReference type="ChEBI" id="CHEBI:29985"/>
        <dbReference type="ChEBI" id="CHEBI:57766"/>
        <dbReference type="ChEBI" id="CHEBI:57980"/>
        <dbReference type="EC" id="2.6.1.9"/>
    </reaction>
</comment>
<comment type="cofactor">
    <cofactor evidence="1">
        <name>pyridoxal 5'-phosphate</name>
        <dbReference type="ChEBI" id="CHEBI:597326"/>
    </cofactor>
</comment>
<comment type="pathway">
    <text evidence="1">Amino-acid biosynthesis; L-histidine biosynthesis; L-histidine from 5-phospho-alpha-D-ribose 1-diphosphate: step 7/9.</text>
</comment>
<comment type="subunit">
    <text evidence="1">Homodimer.</text>
</comment>
<comment type="similarity">
    <text evidence="1">Belongs to the class-II pyridoxal-phosphate-dependent aminotransferase family. Histidinol-phosphate aminotransferase subfamily.</text>
</comment>
<keyword id="KW-0028">Amino-acid biosynthesis</keyword>
<keyword id="KW-0032">Aminotransferase</keyword>
<keyword id="KW-0368">Histidine biosynthesis</keyword>
<keyword id="KW-0663">Pyridoxal phosphate</keyword>
<keyword id="KW-1185">Reference proteome</keyword>
<keyword id="KW-0808">Transferase</keyword>
<dbReference type="EC" id="2.6.1.9" evidence="1"/>
<dbReference type="EMBL" id="CP000769">
    <property type="protein sequence ID" value="ABS26512.1"/>
    <property type="molecule type" value="Genomic_DNA"/>
</dbReference>
<dbReference type="RefSeq" id="WP_012097098.1">
    <property type="nucleotide sequence ID" value="NC_009675.1"/>
</dbReference>
<dbReference type="SMR" id="A7HCR6"/>
<dbReference type="STRING" id="404589.Anae109_2310"/>
<dbReference type="KEGG" id="afw:Anae109_2310"/>
<dbReference type="eggNOG" id="COG0079">
    <property type="taxonomic scope" value="Bacteria"/>
</dbReference>
<dbReference type="HOGENOM" id="CLU_017584_3_3_7"/>
<dbReference type="OrthoDB" id="9813612at2"/>
<dbReference type="UniPathway" id="UPA00031">
    <property type="reaction ID" value="UER00012"/>
</dbReference>
<dbReference type="Proteomes" id="UP000006382">
    <property type="component" value="Chromosome"/>
</dbReference>
<dbReference type="GO" id="GO:0004400">
    <property type="term" value="F:histidinol-phosphate transaminase activity"/>
    <property type="evidence" value="ECO:0007669"/>
    <property type="project" value="UniProtKB-UniRule"/>
</dbReference>
<dbReference type="GO" id="GO:0030170">
    <property type="term" value="F:pyridoxal phosphate binding"/>
    <property type="evidence" value="ECO:0007669"/>
    <property type="project" value="InterPro"/>
</dbReference>
<dbReference type="GO" id="GO:0000105">
    <property type="term" value="P:L-histidine biosynthetic process"/>
    <property type="evidence" value="ECO:0007669"/>
    <property type="project" value="UniProtKB-UniRule"/>
</dbReference>
<dbReference type="CDD" id="cd00609">
    <property type="entry name" value="AAT_like"/>
    <property type="match status" value="1"/>
</dbReference>
<dbReference type="Gene3D" id="3.90.1150.10">
    <property type="entry name" value="Aspartate Aminotransferase, domain 1"/>
    <property type="match status" value="1"/>
</dbReference>
<dbReference type="Gene3D" id="3.40.640.10">
    <property type="entry name" value="Type I PLP-dependent aspartate aminotransferase-like (Major domain)"/>
    <property type="match status" value="1"/>
</dbReference>
<dbReference type="HAMAP" id="MF_01023">
    <property type="entry name" value="HisC_aminotrans_2"/>
    <property type="match status" value="1"/>
</dbReference>
<dbReference type="InterPro" id="IPR004839">
    <property type="entry name" value="Aminotransferase_I/II_large"/>
</dbReference>
<dbReference type="InterPro" id="IPR005861">
    <property type="entry name" value="HisP_aminotrans"/>
</dbReference>
<dbReference type="InterPro" id="IPR050106">
    <property type="entry name" value="HistidinolP_aminotransfase"/>
</dbReference>
<dbReference type="InterPro" id="IPR015424">
    <property type="entry name" value="PyrdxlP-dep_Trfase"/>
</dbReference>
<dbReference type="InterPro" id="IPR015421">
    <property type="entry name" value="PyrdxlP-dep_Trfase_major"/>
</dbReference>
<dbReference type="InterPro" id="IPR015422">
    <property type="entry name" value="PyrdxlP-dep_Trfase_small"/>
</dbReference>
<dbReference type="NCBIfam" id="TIGR01141">
    <property type="entry name" value="hisC"/>
    <property type="match status" value="1"/>
</dbReference>
<dbReference type="PANTHER" id="PTHR43643:SF3">
    <property type="entry name" value="HISTIDINOL-PHOSPHATE AMINOTRANSFERASE"/>
    <property type="match status" value="1"/>
</dbReference>
<dbReference type="PANTHER" id="PTHR43643">
    <property type="entry name" value="HISTIDINOL-PHOSPHATE AMINOTRANSFERASE 2"/>
    <property type="match status" value="1"/>
</dbReference>
<dbReference type="Pfam" id="PF00155">
    <property type="entry name" value="Aminotran_1_2"/>
    <property type="match status" value="1"/>
</dbReference>
<dbReference type="SUPFAM" id="SSF53383">
    <property type="entry name" value="PLP-dependent transferases"/>
    <property type="match status" value="1"/>
</dbReference>
<name>HIS8_ANADF</name>
<gene>
    <name evidence="1" type="primary">hisC</name>
    <name type="ordered locus">Anae109_2310</name>
</gene>